<sequence>MAKKVQAYIKLQVKAGQANPSPPVGPALGQHGVNIMEFCKAFNAKTQSLEPGLPTPVIITVYSDRSFTFETKSTPAAVLLKKAAGLKSGSPRPNTQKVGTVTRAQLEEIVVAKQADLTASNMDAAVRTIAGSARAMGLEVEGVN</sequence>
<name>RL11_MARMS</name>
<proteinExistence type="inferred from homology"/>
<comment type="function">
    <text evidence="1">Forms part of the ribosomal stalk which helps the ribosome interact with GTP-bound translation factors.</text>
</comment>
<comment type="subunit">
    <text evidence="1">Part of the ribosomal stalk of the 50S ribosomal subunit. Interacts with L10 and the large rRNA to form the base of the stalk. L10 forms an elongated spine to which L12 dimers bind in a sequential fashion forming a multimeric L10(L12)X complex.</text>
</comment>
<comment type="PTM">
    <text evidence="1">One or more lysine residues are methylated.</text>
</comment>
<comment type="similarity">
    <text evidence="1">Belongs to the universal ribosomal protein uL11 family.</text>
</comment>
<keyword id="KW-0488">Methylation</keyword>
<keyword id="KW-0687">Ribonucleoprotein</keyword>
<keyword id="KW-0689">Ribosomal protein</keyword>
<keyword id="KW-0694">RNA-binding</keyword>
<keyword id="KW-0699">rRNA-binding</keyword>
<protein>
    <recommendedName>
        <fullName evidence="1">Large ribosomal subunit protein uL11</fullName>
    </recommendedName>
    <alternativeName>
        <fullName evidence="2">50S ribosomal protein L11</fullName>
    </alternativeName>
</protein>
<evidence type="ECO:0000255" key="1">
    <source>
        <dbReference type="HAMAP-Rule" id="MF_00736"/>
    </source>
</evidence>
<evidence type="ECO:0000305" key="2"/>
<dbReference type="EMBL" id="CP000749">
    <property type="protein sequence ID" value="ABR73182.1"/>
    <property type="molecule type" value="Genomic_DNA"/>
</dbReference>
<dbReference type="SMR" id="A6W3A3"/>
<dbReference type="STRING" id="400668.Mmwyl1_4287"/>
<dbReference type="KEGG" id="mmw:Mmwyl1_4287"/>
<dbReference type="eggNOG" id="COG0080">
    <property type="taxonomic scope" value="Bacteria"/>
</dbReference>
<dbReference type="HOGENOM" id="CLU_074237_2_0_6"/>
<dbReference type="OrthoDB" id="9802408at2"/>
<dbReference type="GO" id="GO:0022625">
    <property type="term" value="C:cytosolic large ribosomal subunit"/>
    <property type="evidence" value="ECO:0007669"/>
    <property type="project" value="TreeGrafter"/>
</dbReference>
<dbReference type="GO" id="GO:0070180">
    <property type="term" value="F:large ribosomal subunit rRNA binding"/>
    <property type="evidence" value="ECO:0007669"/>
    <property type="project" value="UniProtKB-UniRule"/>
</dbReference>
<dbReference type="GO" id="GO:0003735">
    <property type="term" value="F:structural constituent of ribosome"/>
    <property type="evidence" value="ECO:0007669"/>
    <property type="project" value="InterPro"/>
</dbReference>
<dbReference type="GO" id="GO:0006412">
    <property type="term" value="P:translation"/>
    <property type="evidence" value="ECO:0007669"/>
    <property type="project" value="UniProtKB-UniRule"/>
</dbReference>
<dbReference type="CDD" id="cd00349">
    <property type="entry name" value="Ribosomal_L11"/>
    <property type="match status" value="1"/>
</dbReference>
<dbReference type="FunFam" id="1.10.10.250:FF:000001">
    <property type="entry name" value="50S ribosomal protein L11"/>
    <property type="match status" value="1"/>
</dbReference>
<dbReference type="FunFam" id="3.30.1550.10:FF:000001">
    <property type="entry name" value="50S ribosomal protein L11"/>
    <property type="match status" value="1"/>
</dbReference>
<dbReference type="Gene3D" id="1.10.10.250">
    <property type="entry name" value="Ribosomal protein L11, C-terminal domain"/>
    <property type="match status" value="1"/>
</dbReference>
<dbReference type="Gene3D" id="3.30.1550.10">
    <property type="entry name" value="Ribosomal protein L11/L12, N-terminal domain"/>
    <property type="match status" value="1"/>
</dbReference>
<dbReference type="HAMAP" id="MF_00736">
    <property type="entry name" value="Ribosomal_uL11"/>
    <property type="match status" value="1"/>
</dbReference>
<dbReference type="InterPro" id="IPR000911">
    <property type="entry name" value="Ribosomal_uL11"/>
</dbReference>
<dbReference type="InterPro" id="IPR006519">
    <property type="entry name" value="Ribosomal_uL11_bac-typ"/>
</dbReference>
<dbReference type="InterPro" id="IPR020783">
    <property type="entry name" value="Ribosomal_uL11_C"/>
</dbReference>
<dbReference type="InterPro" id="IPR036769">
    <property type="entry name" value="Ribosomal_uL11_C_sf"/>
</dbReference>
<dbReference type="InterPro" id="IPR020784">
    <property type="entry name" value="Ribosomal_uL11_N"/>
</dbReference>
<dbReference type="InterPro" id="IPR036796">
    <property type="entry name" value="Ribosomal_uL11_N_sf"/>
</dbReference>
<dbReference type="NCBIfam" id="TIGR01632">
    <property type="entry name" value="L11_bact"/>
    <property type="match status" value="1"/>
</dbReference>
<dbReference type="PANTHER" id="PTHR11661">
    <property type="entry name" value="60S RIBOSOMAL PROTEIN L12"/>
    <property type="match status" value="1"/>
</dbReference>
<dbReference type="PANTHER" id="PTHR11661:SF1">
    <property type="entry name" value="LARGE RIBOSOMAL SUBUNIT PROTEIN UL11M"/>
    <property type="match status" value="1"/>
</dbReference>
<dbReference type="Pfam" id="PF00298">
    <property type="entry name" value="Ribosomal_L11"/>
    <property type="match status" value="1"/>
</dbReference>
<dbReference type="Pfam" id="PF03946">
    <property type="entry name" value="Ribosomal_L11_N"/>
    <property type="match status" value="1"/>
</dbReference>
<dbReference type="SMART" id="SM00649">
    <property type="entry name" value="RL11"/>
    <property type="match status" value="1"/>
</dbReference>
<dbReference type="SUPFAM" id="SSF54747">
    <property type="entry name" value="Ribosomal L11/L12e N-terminal domain"/>
    <property type="match status" value="1"/>
</dbReference>
<dbReference type="SUPFAM" id="SSF46906">
    <property type="entry name" value="Ribosomal protein L11, C-terminal domain"/>
    <property type="match status" value="1"/>
</dbReference>
<organism>
    <name type="scientific">Marinomonas sp. (strain MWYL1)</name>
    <dbReference type="NCBI Taxonomy" id="400668"/>
    <lineage>
        <taxon>Bacteria</taxon>
        <taxon>Pseudomonadati</taxon>
        <taxon>Pseudomonadota</taxon>
        <taxon>Gammaproteobacteria</taxon>
        <taxon>Oceanospirillales</taxon>
        <taxon>Oceanospirillaceae</taxon>
        <taxon>Marinomonas</taxon>
    </lineage>
</organism>
<gene>
    <name evidence="1" type="primary">rplK</name>
    <name type="ordered locus">Mmwyl1_4287</name>
</gene>
<reference key="1">
    <citation type="submission" date="2007-06" db="EMBL/GenBank/DDBJ databases">
        <title>Complete sequence of Marinomonas sp. MWYL1.</title>
        <authorList>
            <consortium name="US DOE Joint Genome Institute"/>
            <person name="Copeland A."/>
            <person name="Lucas S."/>
            <person name="Lapidus A."/>
            <person name="Barry K."/>
            <person name="Glavina del Rio T."/>
            <person name="Dalin E."/>
            <person name="Tice H."/>
            <person name="Pitluck S."/>
            <person name="Kiss H."/>
            <person name="Brettin T."/>
            <person name="Bruce D."/>
            <person name="Detter J.C."/>
            <person name="Han C."/>
            <person name="Schmutz J."/>
            <person name="Larimer F."/>
            <person name="Land M."/>
            <person name="Hauser L."/>
            <person name="Kyrpides N."/>
            <person name="Kim E."/>
            <person name="Johnston A.W.B."/>
            <person name="Todd J.D."/>
            <person name="Rogers R."/>
            <person name="Wexler M."/>
            <person name="Bond P.L."/>
            <person name="Li Y."/>
            <person name="Richardson P."/>
        </authorList>
    </citation>
    <scope>NUCLEOTIDE SEQUENCE [LARGE SCALE GENOMIC DNA]</scope>
    <source>
        <strain>MWYL1</strain>
    </source>
</reference>
<feature type="chain" id="PRO_1000083388" description="Large ribosomal subunit protein uL11">
    <location>
        <begin position="1"/>
        <end position="144"/>
    </location>
</feature>
<accession>A6W3A3</accession>